<evidence type="ECO:0000255" key="1">
    <source>
        <dbReference type="HAMAP-Rule" id="MF_01220"/>
    </source>
</evidence>
<reference key="1">
    <citation type="journal article" date="2005" name="PLoS Biol.">
        <title>Major structural differences and novel potential virulence mechanisms from the genomes of multiple Campylobacter species.</title>
        <authorList>
            <person name="Fouts D.E."/>
            <person name="Mongodin E.F."/>
            <person name="Mandrell R.E."/>
            <person name="Miller W.G."/>
            <person name="Rasko D.A."/>
            <person name="Ravel J."/>
            <person name="Brinkac L.M."/>
            <person name="DeBoy R.T."/>
            <person name="Parker C.T."/>
            <person name="Daugherty S.C."/>
            <person name="Dodson R.J."/>
            <person name="Durkin A.S."/>
            <person name="Madupu R."/>
            <person name="Sullivan S.A."/>
            <person name="Shetty J.U."/>
            <person name="Ayodeji M.A."/>
            <person name="Shvartsbeyn A."/>
            <person name="Schatz M.C."/>
            <person name="Badger J.H."/>
            <person name="Fraser C.M."/>
            <person name="Nelson K.E."/>
        </authorList>
    </citation>
    <scope>NUCLEOTIDE SEQUENCE [LARGE SCALE GENOMIC DNA]</scope>
    <source>
        <strain>RM1221</strain>
    </source>
</reference>
<gene>
    <name evidence="1" type="primary">pyrH</name>
    <name type="ordered locus">CJE1410</name>
</gene>
<organism>
    <name type="scientific">Campylobacter jejuni (strain RM1221)</name>
    <dbReference type="NCBI Taxonomy" id="195099"/>
    <lineage>
        <taxon>Bacteria</taxon>
        <taxon>Pseudomonadati</taxon>
        <taxon>Campylobacterota</taxon>
        <taxon>Epsilonproteobacteria</taxon>
        <taxon>Campylobacterales</taxon>
        <taxon>Campylobacteraceae</taxon>
        <taxon>Campylobacter</taxon>
    </lineage>
</organism>
<name>PYRH_CAMJR</name>
<proteinExistence type="inferred from homology"/>
<keyword id="KW-0021">Allosteric enzyme</keyword>
<keyword id="KW-0067">ATP-binding</keyword>
<keyword id="KW-0963">Cytoplasm</keyword>
<keyword id="KW-0418">Kinase</keyword>
<keyword id="KW-0547">Nucleotide-binding</keyword>
<keyword id="KW-0665">Pyrimidine biosynthesis</keyword>
<keyword id="KW-0808">Transferase</keyword>
<comment type="function">
    <text evidence="1">Catalyzes the reversible phosphorylation of UMP to UDP.</text>
</comment>
<comment type="catalytic activity">
    <reaction evidence="1">
        <text>UMP + ATP = UDP + ADP</text>
        <dbReference type="Rhea" id="RHEA:24400"/>
        <dbReference type="ChEBI" id="CHEBI:30616"/>
        <dbReference type="ChEBI" id="CHEBI:57865"/>
        <dbReference type="ChEBI" id="CHEBI:58223"/>
        <dbReference type="ChEBI" id="CHEBI:456216"/>
        <dbReference type="EC" id="2.7.4.22"/>
    </reaction>
</comment>
<comment type="activity regulation">
    <text evidence="1">Allosterically activated by GTP. Inhibited by UTP.</text>
</comment>
<comment type="pathway">
    <text evidence="1">Pyrimidine metabolism; CTP biosynthesis via de novo pathway; UDP from UMP (UMPK route): step 1/1.</text>
</comment>
<comment type="subunit">
    <text evidence="1">Homohexamer.</text>
</comment>
<comment type="subcellular location">
    <subcellularLocation>
        <location evidence="1">Cytoplasm</location>
    </subcellularLocation>
</comment>
<comment type="similarity">
    <text evidence="1">Belongs to the UMP kinase family.</text>
</comment>
<protein>
    <recommendedName>
        <fullName evidence="1">Uridylate kinase</fullName>
        <shortName evidence="1">UK</shortName>
        <ecNumber evidence="1">2.7.4.22</ecNumber>
    </recommendedName>
    <alternativeName>
        <fullName evidence="1">Uridine monophosphate kinase</fullName>
        <shortName evidence="1">UMP kinase</shortName>
        <shortName evidence="1">UMPK</shortName>
    </alternativeName>
</protein>
<feature type="chain" id="PRO_1000053903" description="Uridylate kinase">
    <location>
        <begin position="1"/>
        <end position="239"/>
    </location>
</feature>
<feature type="region of interest" description="Involved in allosteric activation by GTP" evidence="1">
    <location>
        <begin position="18"/>
        <end position="23"/>
    </location>
</feature>
<feature type="binding site" evidence="1">
    <location>
        <begin position="10"/>
        <end position="13"/>
    </location>
    <ligand>
        <name>ATP</name>
        <dbReference type="ChEBI" id="CHEBI:30616"/>
    </ligand>
</feature>
<feature type="binding site" evidence="1">
    <location>
        <position position="52"/>
    </location>
    <ligand>
        <name>UMP</name>
        <dbReference type="ChEBI" id="CHEBI:57865"/>
    </ligand>
</feature>
<feature type="binding site" evidence="1">
    <location>
        <position position="53"/>
    </location>
    <ligand>
        <name>ATP</name>
        <dbReference type="ChEBI" id="CHEBI:30616"/>
    </ligand>
</feature>
<feature type="binding site" evidence="1">
    <location>
        <position position="57"/>
    </location>
    <ligand>
        <name>ATP</name>
        <dbReference type="ChEBI" id="CHEBI:30616"/>
    </ligand>
</feature>
<feature type="binding site" evidence="1">
    <location>
        <position position="73"/>
    </location>
    <ligand>
        <name>UMP</name>
        <dbReference type="ChEBI" id="CHEBI:57865"/>
    </ligand>
</feature>
<feature type="binding site" evidence="1">
    <location>
        <begin position="134"/>
        <end position="141"/>
    </location>
    <ligand>
        <name>UMP</name>
        <dbReference type="ChEBI" id="CHEBI:57865"/>
    </ligand>
</feature>
<feature type="binding site" evidence="1">
    <location>
        <position position="161"/>
    </location>
    <ligand>
        <name>ATP</name>
        <dbReference type="ChEBI" id="CHEBI:30616"/>
    </ligand>
</feature>
<feature type="binding site" evidence="1">
    <location>
        <position position="167"/>
    </location>
    <ligand>
        <name>ATP</name>
        <dbReference type="ChEBI" id="CHEBI:30616"/>
    </ligand>
</feature>
<feature type="binding site" evidence="1">
    <location>
        <position position="170"/>
    </location>
    <ligand>
        <name>ATP</name>
        <dbReference type="ChEBI" id="CHEBI:30616"/>
    </ligand>
</feature>
<dbReference type="EC" id="2.7.4.22" evidence="1"/>
<dbReference type="EMBL" id="CP000025">
    <property type="protein sequence ID" value="AAW35729.1"/>
    <property type="molecule type" value="Genomic_DNA"/>
</dbReference>
<dbReference type="RefSeq" id="WP_002854049.1">
    <property type="nucleotide sequence ID" value="NC_003912.7"/>
</dbReference>
<dbReference type="SMR" id="Q5HTI9"/>
<dbReference type="KEGG" id="cjr:CJE1410"/>
<dbReference type="HOGENOM" id="CLU_033861_0_0_7"/>
<dbReference type="UniPathway" id="UPA00159">
    <property type="reaction ID" value="UER00275"/>
</dbReference>
<dbReference type="GO" id="GO:0005829">
    <property type="term" value="C:cytosol"/>
    <property type="evidence" value="ECO:0007669"/>
    <property type="project" value="TreeGrafter"/>
</dbReference>
<dbReference type="GO" id="GO:0005524">
    <property type="term" value="F:ATP binding"/>
    <property type="evidence" value="ECO:0007669"/>
    <property type="project" value="UniProtKB-KW"/>
</dbReference>
<dbReference type="GO" id="GO:0033862">
    <property type="term" value="F:UMP kinase activity"/>
    <property type="evidence" value="ECO:0007669"/>
    <property type="project" value="UniProtKB-EC"/>
</dbReference>
<dbReference type="GO" id="GO:0044210">
    <property type="term" value="P:'de novo' CTP biosynthetic process"/>
    <property type="evidence" value="ECO:0007669"/>
    <property type="project" value="UniProtKB-UniRule"/>
</dbReference>
<dbReference type="GO" id="GO:0006225">
    <property type="term" value="P:UDP biosynthetic process"/>
    <property type="evidence" value="ECO:0007669"/>
    <property type="project" value="TreeGrafter"/>
</dbReference>
<dbReference type="CDD" id="cd04254">
    <property type="entry name" value="AAK_UMPK-PyrH-Ec"/>
    <property type="match status" value="1"/>
</dbReference>
<dbReference type="FunFam" id="3.40.1160.10:FF:000001">
    <property type="entry name" value="Uridylate kinase"/>
    <property type="match status" value="1"/>
</dbReference>
<dbReference type="Gene3D" id="3.40.1160.10">
    <property type="entry name" value="Acetylglutamate kinase-like"/>
    <property type="match status" value="1"/>
</dbReference>
<dbReference type="HAMAP" id="MF_01220_B">
    <property type="entry name" value="PyrH_B"/>
    <property type="match status" value="1"/>
</dbReference>
<dbReference type="InterPro" id="IPR036393">
    <property type="entry name" value="AceGlu_kinase-like_sf"/>
</dbReference>
<dbReference type="InterPro" id="IPR001048">
    <property type="entry name" value="Asp/Glu/Uridylate_kinase"/>
</dbReference>
<dbReference type="InterPro" id="IPR011817">
    <property type="entry name" value="Uridylate_kinase"/>
</dbReference>
<dbReference type="InterPro" id="IPR015963">
    <property type="entry name" value="Uridylate_kinase_bac"/>
</dbReference>
<dbReference type="NCBIfam" id="TIGR02075">
    <property type="entry name" value="pyrH_bact"/>
    <property type="match status" value="1"/>
</dbReference>
<dbReference type="PANTHER" id="PTHR42833">
    <property type="entry name" value="URIDYLATE KINASE"/>
    <property type="match status" value="1"/>
</dbReference>
<dbReference type="PANTHER" id="PTHR42833:SF4">
    <property type="entry name" value="URIDYLATE KINASE PUMPKIN, CHLOROPLASTIC"/>
    <property type="match status" value="1"/>
</dbReference>
<dbReference type="Pfam" id="PF00696">
    <property type="entry name" value="AA_kinase"/>
    <property type="match status" value="1"/>
</dbReference>
<dbReference type="PIRSF" id="PIRSF005650">
    <property type="entry name" value="Uridylate_kin"/>
    <property type="match status" value="1"/>
</dbReference>
<dbReference type="SUPFAM" id="SSF53633">
    <property type="entry name" value="Carbamate kinase-like"/>
    <property type="match status" value="1"/>
</dbReference>
<sequence length="239" mass="26031">MQERKRVLVKFSGEALAGENGFGIENSILKFIASEIKELIKNQIEVGIVIGGGNIIRGVSAAKGGLIKRTSGDHMGMLATVINAIAIQEALESSGLEVRVQSAIQMEAFCETYIMRRAQRHLEKGRVVVFAAGTGNPYFTTDTTAILRAVEIDADMVIKATKVNGVYDKDPKQFDDAVFLNTLSYDEAMQDNIKVMDDTAIALAKDNKLPIVVCNMFEEGNLLKIIQGDTSLCSIVKNN</sequence>
<accession>Q5HTI9</accession>